<name>PDR1_CANGA</name>
<comment type="function">
    <text evidence="4 6 7 8 10 11 12 13 14 15 16 17 18 21 22 23 24 25 26 28 29">Master transcriptional regulator of a pleiotropic drug resistance network that contributes to the azole resistance of clinical isolates and petite mutants (PubMed:15388433, PubMed:16569856, PubMed:16803598, PubMed:19380598, PubMed:20547810, PubMed:21129149, PubMed:21131438, PubMed:21193550, PubMed:23229483, PubMed:23979762, PubMed:28700656, PubMed:29363861, PubMed:29581110, PubMed:29648590). Regulates the efflux of rhodamine 6G (PubMed:16569856). Regulates both constitutive and drug-induced expression of the pleiotropic ABC efflux transporter CDR1 (PubMed:16569856, PubMed:23229483, PubMed:23979762). Commonly regulated genes include also those encoding ABC transporters PDH1, SNQ2, and YOR1, a phospholipid biosynthetic enzyme (PDR16), seven-transmembrane (TM) domain-containing proteins (RTA1 and RSB1), an oxidoreductase (YMR102c-like), a sphingolipid biosynthetic enzyme (IPT1), and a transcription factor (RPN4). Second, along with this common core of regulated genes, interesting unique genes including genes encoding an ABC transporter likely localized to the vacuolar membrane (YBT1), proteins involved in DNA repair (REV1 and MEC3), the mitochondrially targeted proteins YIM1 and PUP1, 3 oxidoreductases (OYE2, YIR036c-like, and YNL134c-like proteins), a major facilitator superfamily member (QDR2), a carbonic anhydrase (NCE103), an alcohol acetyltransferase (ATF2), and a transcription factor (HAPI) (PubMed:25199772). Activates transcription of target genes in response to direct binding to specific xenobiotics by a discrete transferable ligand-binding domain (PubMed:18385733). Stimulates gene expression of target genes via binding to 5'-TCCGYGGA-3' elements called pleiotropic drug response elements (PDREs) (PubMed:21131438). PDR1 is recruited to the target promoters by mediator subunit GAL11A via its interaction with the KIX domain of GAL11A (PubMed:21131438, PubMed:26886795). Modulates the interaction with host cells in ways that may contribute to increased virulence (PubMed:21408004, PubMed:23460523, PubMed:29464833). Regulates specific cell wall adhesins and in particular EPA1, explaining the increase in adherence to epithelial cells in gain-of-function mutants (PubMed:27303714, PubMed:29464833).</text>
</comment>
<comment type="subunit">
    <text evidence="22 29">Interacts (via the activation domain AD) with the mediator subunit GAL11A (via the KIX domain).</text>
</comment>
<comment type="subcellular location">
    <subcellularLocation>
        <location evidence="2">Nucleus</location>
    </subcellularLocation>
</comment>
<comment type="induction">
    <text evidence="9 13 19 24 25 27 29">Expression is up-regulated by fluconazole and during biofilm formation (PubMed:24645630). Expression is also induced by oxidative stress caused by the antifungal drug, benomyl (PubMed:18627600). Expression is regulated by the regulator of proteasome expression RPN4 (PubMed:18627600, PubMed:29648590). Transcriptionally autoregulated through a pleiotropic drug response elements (PDRE) within its own promoter (PubMed:21131438, PubMed:29363861). Expression is also up-regulated by clorgyline, an inhibitor of azole transporters (PubMed:28700656). Expression is negatively regulated by the J protein JJJ1 (PubMed:29507891).</text>
</comment>
<comment type="domain">
    <text evidence="31 32">PDR1 contains several specific functional domains including an N-terminal DNA-binding domain (DBD) containing the Zn(2)-C6 fungal-type zinc finger; an inhibitory domain (ID) that may be involved in the negative regulation of the activity of the protein; a middle homology region (MHR) that probably assists the C6 zinc cluster in DNA target discrimination; and a C-terminal activation domain (AD) that binds to the KIX domain of GAL11A for recruitment to target promoters.</text>
</comment>
<comment type="domain">
    <text evidence="1">The 9aaTAD motif (residues 1091 to 1099) is a transactivation domain present in a large number of yeast and animal transcription factors.</text>
</comment>
<comment type="disruption phenotype">
    <text evidence="5 6 7 24">Leads to hypersensitivity to cycloheximide (PubMed:16078083). Leads to an 8- to 16-fold increase in fluconazole susceptibility (PubMed:16569856, PubMed:16803598, PubMed:28700656). Also leads to increased rhodamine accumulation (PubMed:16569856).</text>
</comment>
<comment type="biotechnology">
    <text evidence="12">The identification of PDR1 inhibitors or loss-of-function mutations enhancing activities of antimycotics may be useful for the development of novel strategies to combat fungal infections caused by the multidrug-resistant C.glabrata strains.</text>
</comment>
<reference key="1">
    <citation type="journal article" date="2004" name="Nature">
        <title>Genome evolution in yeasts.</title>
        <authorList>
            <person name="Dujon B."/>
            <person name="Sherman D."/>
            <person name="Fischer G."/>
            <person name="Durrens P."/>
            <person name="Casaregola S."/>
            <person name="Lafontaine I."/>
            <person name="de Montigny J."/>
            <person name="Marck C."/>
            <person name="Neuveglise C."/>
            <person name="Talla E."/>
            <person name="Goffard N."/>
            <person name="Frangeul L."/>
            <person name="Aigle M."/>
            <person name="Anthouard V."/>
            <person name="Babour A."/>
            <person name="Barbe V."/>
            <person name="Barnay S."/>
            <person name="Blanchin S."/>
            <person name="Beckerich J.-M."/>
            <person name="Beyne E."/>
            <person name="Bleykasten C."/>
            <person name="Boisrame A."/>
            <person name="Boyer J."/>
            <person name="Cattolico L."/>
            <person name="Confanioleri F."/>
            <person name="de Daruvar A."/>
            <person name="Despons L."/>
            <person name="Fabre E."/>
            <person name="Fairhead C."/>
            <person name="Ferry-Dumazet H."/>
            <person name="Groppi A."/>
            <person name="Hantraye F."/>
            <person name="Hennequin C."/>
            <person name="Jauniaux N."/>
            <person name="Joyet P."/>
            <person name="Kachouri R."/>
            <person name="Kerrest A."/>
            <person name="Koszul R."/>
            <person name="Lemaire M."/>
            <person name="Lesur I."/>
            <person name="Ma L."/>
            <person name="Muller H."/>
            <person name="Nicaud J.-M."/>
            <person name="Nikolski M."/>
            <person name="Oztas S."/>
            <person name="Ozier-Kalogeropoulos O."/>
            <person name="Pellenz S."/>
            <person name="Potier S."/>
            <person name="Richard G.-F."/>
            <person name="Straub M.-L."/>
            <person name="Suleau A."/>
            <person name="Swennen D."/>
            <person name="Tekaia F."/>
            <person name="Wesolowski-Louvel M."/>
            <person name="Westhof E."/>
            <person name="Wirth B."/>
            <person name="Zeniou-Meyer M."/>
            <person name="Zivanovic Y."/>
            <person name="Bolotin-Fukuhara M."/>
            <person name="Thierry A."/>
            <person name="Bouchier C."/>
            <person name="Caudron B."/>
            <person name="Scarpelli C."/>
            <person name="Gaillardin C."/>
            <person name="Weissenbach J."/>
            <person name="Wincker P."/>
            <person name="Souciet J.-L."/>
        </authorList>
    </citation>
    <scope>NUCLEOTIDE SEQUENCE [LARGE SCALE GENOMIC DNA]</scope>
    <source>
        <strain>ATCC 2001 / BCRC 20586 / JCM 3761 / NBRC 0622 / NRRL Y-65 / CBS 138</strain>
    </source>
</reference>
<reference key="2">
    <citation type="journal article" date="2004" name="Antimicrob. Agents Chemother.">
        <title>Azole resistance in Candida glabrata: coordinate upregulation of multidrug transporters and evidence for a Pdr1-like transcription factor.</title>
        <authorList>
            <person name="Vermitsky J.P."/>
            <person name="Edlind T.D."/>
        </authorList>
    </citation>
    <scope>FUNCTION</scope>
</reference>
<reference key="3">
    <citation type="journal article" date="2005" name="Curr. Genet.">
        <title>Promoter-dependent disruption of genes: simple, rapid, and specific PCR-based method with application to three different yeast.</title>
        <authorList>
            <person name="Edlind T.D."/>
            <person name="Henry K.W."/>
            <person name="Vermitsky J.P."/>
            <person name="Edlind M.P."/>
            <person name="Raj S."/>
            <person name="Katiyar S.K."/>
        </authorList>
    </citation>
    <scope>DISRUPTION PHENOTYPE</scope>
</reference>
<reference key="4">
    <citation type="journal article" date="2006" name="Antimicrob. Agents Chemother.">
        <title>Candida glabrata PDR1, a transcriptional regulator of a pleiotropic drug resistance network, mediates azole resistance in clinical isolates and petite mutants.</title>
        <authorList>
            <person name="Tsai H.F."/>
            <person name="Krol A.A."/>
            <person name="Sarti K.E."/>
            <person name="Bennett J.E."/>
        </authorList>
    </citation>
    <scope>FUNCTION</scope>
    <scope>DISRUPTION PHENOTYPE</scope>
    <scope>MUTAGENESIS OF TRP-297 AND PHE-575</scope>
</reference>
<reference key="5">
    <citation type="journal article" date="2006" name="Mol. Microbiol.">
        <title>Pdr1 regulates multidrug resistance in Candida glabrata: gene disruption and genome-wide expression studies.</title>
        <authorList>
            <person name="Vermitsky J.P."/>
            <person name="Earhart K.D."/>
            <person name="Smith W.L."/>
            <person name="Homayouni R."/>
            <person name="Edlind T.D."/>
            <person name="Rogers P.D."/>
        </authorList>
    </citation>
    <scope>FUNCTION</scope>
    <scope>DISRUPTION PHENOTYPE</scope>
</reference>
<reference key="6">
    <citation type="journal article" date="2008" name="BMC Genomics">
        <title>Structure and properties of transcriptional networks driving selenite stress response in yeasts.</title>
        <authorList>
            <person name="Salin H."/>
            <person name="Fardeau V."/>
            <person name="Piccini E."/>
            <person name="Lelandais G."/>
            <person name="Tanty V."/>
            <person name="Lemoine S."/>
            <person name="Jacq C."/>
            <person name="Devaux F."/>
        </authorList>
    </citation>
    <scope>INDUCTION</scope>
</reference>
<reference key="7">
    <citation type="journal article" date="2008" name="Nature">
        <title>A nuclear receptor-like pathway regulating multidrug resistance in fungi.</title>
        <authorList>
            <person name="Thakur J.K."/>
            <person name="Arthanari H."/>
            <person name="Yang F."/>
            <person name="Pan S.J."/>
            <person name="Fan X."/>
            <person name="Breger J."/>
            <person name="Frueh D.P."/>
            <person name="Gulshan K."/>
            <person name="Li D.K."/>
            <person name="Mylonakis E."/>
            <person name="Struhl K."/>
            <person name="Moye-Rowley W.S."/>
            <person name="Cormack B.P."/>
            <person name="Wagner G."/>
            <person name="Naeaer A.M."/>
        </authorList>
    </citation>
    <scope>FUNCTION</scope>
</reference>
<reference key="8">
    <citation type="journal article" date="2009" name="Antimicrob. Agents Chemother.">
        <title>Hypersusceptibility to azole antifungals in a clinical isolate of Candida glabrata with reduced aerobic growth.</title>
        <authorList>
            <person name="Vandeputte P."/>
            <person name="Tronchin G."/>
            <person name="Rocher F."/>
            <person name="Renier G."/>
            <person name="Berges T."/>
            <person name="Chabasse D."/>
            <person name="Bouchara J.P."/>
        </authorList>
    </citation>
    <scope>FUNCTION</scope>
</reference>
<reference key="9">
    <citation type="journal article" date="2010" name="Antimicrob. Agents Chemother.">
        <title>Microarray and molecular analyses of the azole resistance mechanism in Candida glabrata oropharyngeal isolates.</title>
        <authorList>
            <person name="Tsai H.F."/>
            <person name="Sammons L.R."/>
            <person name="Zhang X."/>
            <person name="Suffis S.D."/>
            <person name="Su Q."/>
            <person name="Myers T.G."/>
            <person name="Marr K.A."/>
            <person name="Bennett J.E."/>
        </authorList>
    </citation>
    <scope>FUNCTION</scope>
    <scope>MUTAGENESIS OF LEU-280; LEU-344; GLY-348; SER-391; ASN-764; ARG-772 AND GLY-943</scope>
</reference>
<reference key="10">
    <citation type="journal article" date="2011" name="Eukaryot. Cell">
        <title>Regulation of the CgPdr1 transcription factor from the pathogen Candida glabrata.</title>
        <authorList>
            <person name="Paul S."/>
            <person name="Schmidt J.A."/>
            <person name="Moye-Rowley W.S."/>
        </authorList>
    </citation>
    <scope>FUNCTION</scope>
    <scope>INDUCTION</scope>
</reference>
<reference key="11">
    <citation type="journal article" date="2011" name="Eukaryot. Cell">
        <title>Genomewide expression profile analysis of the Candida glabrata Pdr1 regulon.</title>
        <authorList>
            <person name="Caudle K.E."/>
            <person name="Barker K.S."/>
            <person name="Wiederhold N.P."/>
            <person name="Xu L."/>
            <person name="Homayouni R."/>
            <person name="Rogers P.D."/>
        </authorList>
    </citation>
    <scope>FUNCTION</scope>
</reference>
<reference key="12">
    <citation type="journal article" date="2011" name="FEMS Yeast Res.">
        <title>A yeast cell-based system for screening Candida glabrata multidrug resistance reversal agents and selection of loss-of-function pdr1 mutants.</title>
        <authorList>
            <person name="Goffa E."/>
            <person name="Bialkova A."/>
            <person name="Batova M."/>
            <person name="Dzugasova V."/>
            <person name="Subik J."/>
        </authorList>
    </citation>
    <scope>FUNCTION</scope>
    <scope>MUTAGENESIS OF 947-SER--LEU-1107</scope>
    <scope>BIOTECHNOLOGY</scope>
</reference>
<reference key="13">
    <citation type="journal article" date="2011" name="PLoS ONE">
        <title>Contribution of CgPDR1-regulated genes in enhanced virulence of azole-resistant Candida glabrata.</title>
        <authorList>
            <person name="Ferrari S."/>
            <person name="Sanguinetti M."/>
            <person name="Torelli R."/>
            <person name="Posteraro B."/>
            <person name="Sanglard D."/>
        </authorList>
    </citation>
    <scope>FUNCTION</scope>
    <scope>MUTAGENESIS OF LEU-280; ARG-376; TYR-584; THR-588; PRO-822; ASP-1082 AND GLU-1083</scope>
</reference>
<reference key="14">
    <citation type="journal article" date="2013" name="Antimicrob. Agents Chemother.">
        <title>Flucytosine antagonism of azole activity versus Candida glabrata: role of transcription factor Pdr1 and multidrug transporter Cdr1.</title>
        <authorList>
            <person name="Steier Z."/>
            <person name="Vermitsky J.P."/>
            <person name="Toner G."/>
            <person name="Gygax S.E."/>
            <person name="Edlind T."/>
            <person name="Katiyar S."/>
        </authorList>
    </citation>
    <scope>FUNCTION</scope>
</reference>
<reference key="15">
    <citation type="journal article" date="2013" name="Antimicrob. Agents Chemother.">
        <title>STB5 is a negative regulator of azole resistance in Candida glabrata.</title>
        <authorList>
            <person name="Noble J.A."/>
            <person name="Tsai H.F."/>
            <person name="Suffis S.D."/>
            <person name="Su Q."/>
            <person name="Myers T.G."/>
            <person name="Bennett J.E."/>
        </authorList>
    </citation>
    <scope>FUNCTION</scope>
</reference>
<reference key="16">
    <citation type="journal article" date="2013" name="Infect. Immun.">
        <title>Gain-of-function mutations in PDR1, a regulator of antifungal drug resistance in Candida glabrata, control adherence to host cells.</title>
        <authorList>
            <person name="Vale-Silva L."/>
            <person name="Ischer F."/>
            <person name="Leibundgut-Landmann S."/>
            <person name="Sanglard D."/>
        </authorList>
    </citation>
    <scope>FUNCTION</scope>
    <scope>MUTAGENESIS OF LEU-280; ARG-376 AND THR-588</scope>
</reference>
<reference key="17">
    <citation type="journal article" date="2014" name="Antimicrob. Agents Chemother.">
        <title>Identification of genomic binding sites for Candida glabrata Pdr1 transcription factor in wild-type and rho0 cells.</title>
        <authorList>
            <person name="Paul S."/>
            <person name="Bair T.B."/>
            <person name="Moye-Rowley W.S."/>
        </authorList>
    </citation>
    <scope>FUNCTION</scope>
</reference>
<reference key="18">
    <citation type="journal article" date="2014" name="Biofouling">
        <title>Effects of fluconazole on Candida glabrata biofilms and its relationship with ABC transporter gene expression.</title>
        <authorList>
            <person name="Fonseca E."/>
            <person name="Silva S."/>
            <person name="Rodrigues C.F."/>
            <person name="Alves C.T."/>
            <person name="Azeredo J."/>
            <person name="Henriques M."/>
        </authorList>
    </citation>
    <scope>INDUCTION</scope>
</reference>
<reference key="19">
    <citation type="journal article" date="2014" name="FEMS Yeast Res.">
        <title>Environmental azole fungicide, prochloraz, can induce cross-resistance to medical triazoles in Candida glabrata.</title>
        <authorList>
            <person name="Faria-Ramos I."/>
            <person name="Tavares P.R."/>
            <person name="Farinha S."/>
            <person name="Neves-Maia J."/>
            <person name="Miranda I.M."/>
            <person name="Silva R.M."/>
            <person name="Estevinho L.M."/>
            <person name="Pina-Vaz C."/>
            <person name="Rodrigues A.G."/>
        </authorList>
    </citation>
    <scope>FUNCTION</scope>
    <scope>MUTAGENESIS OF ASP-243</scope>
</reference>
<reference key="20">
    <citation type="journal article" date="2016" name="MSphere">
        <title>Upregulation of the adhesin gene EPA1 mediated by PDR1 in Candida glabrata leads to enhanced host colonization.</title>
        <authorList>
            <person name="Vale-Silva L.A."/>
            <person name="Moeckli B."/>
            <person name="Torelli R."/>
            <person name="Posteraro B."/>
            <person name="Sanguinetti M."/>
            <person name="Sanglard D."/>
        </authorList>
    </citation>
    <scope>FUNCTION</scope>
</reference>
<reference key="21">
    <citation type="journal article" date="2016" name="Nature">
        <title>Inhibiting fungal multidrug resistance by disrupting an activator-Mediator interaction.</title>
        <authorList>
            <person name="Nishikawa J.L."/>
            <person name="Boeszoermenyi A."/>
            <person name="Vale-Silva L.A."/>
            <person name="Torelli R."/>
            <person name="Posteraro B."/>
            <person name="Sohn Y.J."/>
            <person name="Ji F."/>
            <person name="Gelev V."/>
            <person name="Sanglard D."/>
            <person name="Sanguinetti M."/>
            <person name="Sadreyev R.I."/>
            <person name="Mukherjee G."/>
            <person name="Bhyravabhotla J."/>
            <person name="Buhrlage S.J."/>
            <person name="Gray N.S."/>
            <person name="Wagner G."/>
            <person name="Naeaer A.M."/>
            <person name="Arthanari H."/>
        </authorList>
    </citation>
    <scope>FUNCTION</scope>
    <scope>INTERACTION WITH GAL11A</scope>
    <scope>DOMAIN</scope>
</reference>
<reference key="22">
    <citation type="journal article" date="2017" name="PLoS ONE">
        <title>Unexpected effects of azole transporter inhibitors on antifungal susceptibility in Candida glabrata and other pathogenic Candida species.</title>
        <authorList>
            <person name="Nagayoshi Y."/>
            <person name="Miyazaki T."/>
            <person name="Shimamura S."/>
            <person name="Nakayama H."/>
            <person name="Minematsu A."/>
            <person name="Yamauchi S."/>
            <person name="Takazono T."/>
            <person name="Nakamura S."/>
            <person name="Yanagihara K."/>
            <person name="Kohno S."/>
            <person name="Mukae H."/>
            <person name="Izumikawa K."/>
        </authorList>
    </citation>
    <scope>FUNCTION</scope>
    <scope>INDUCTION</scope>
    <scope>DISRUPTION PHENOTYPE</scope>
</reference>
<reference key="23">
    <citation type="journal article" date="2018" name="FEMS Yeast Res.">
        <title>Sequence modification of the master regulator Pdr1 interferes with its transcriptional autoregulation and confers altered azole resistance in Candida glabrata.</title>
        <authorList>
            <person name="Tian Y."/>
            <person name="Gao N."/>
            <person name="Ni Q."/>
            <person name="Mao Y."/>
            <person name="Dong D."/>
            <person name="Huang X."/>
            <person name="Jiang C."/>
            <person name="Li Z."/>
            <person name="Zhang L."/>
            <person name="Wang X."/>
            <person name="Peng Y."/>
            <person name="Chen C."/>
        </authorList>
    </citation>
    <scope>FUNCTION</scope>
    <scope>INDUCTION</scope>
    <scope>INTERACTION WITH GAL11A</scope>
</reference>
<reference key="24">
    <citation type="journal article" date="2018" name="Mol. Microbiol.">
        <title>Positive autoregulation and repression of transactivation are key regulatory features of the Candida glabrata Pdr1 transcription factor.</title>
        <authorList>
            <person name="Khakhina S."/>
            <person name="Simonicova L."/>
            <person name="Moye-Rowley W.S."/>
        </authorList>
    </citation>
    <scope>FUNCTION</scope>
    <scope>INDUCTION</scope>
    <scope>DOMAIN</scope>
    <scope>MUTAGENESIS OF 255-ASN--SER-968; ARG-376; TYR-584; PRO-822 AND ASP-1082</scope>
</reference>
<reference key="25">
    <citation type="journal article" date="2018" name="Antimicrob. Agents Chemother.">
        <title>Profiling of PDR1 and MSH2 in Candida glabrata bloodstream isolates from a multicenter study in China.</title>
        <authorList>
            <person name="Hou X."/>
            <person name="Xiao M."/>
            <person name="Wang H."/>
            <person name="Yu S.Y."/>
            <person name="Zhang G."/>
            <person name="Zhao Y."/>
            <person name="Xu Y.C."/>
        </authorList>
    </citation>
    <scope>FUNCTION</scope>
</reference>
<reference key="26">
    <citation type="journal article" date="2018" name="MSphere">
        <title>Jjj1 is a negative regulator of Pdr1-mediated fluconazole resistance in Candida glabrata.</title>
        <authorList>
            <person name="Whaley S.G."/>
            <person name="Caudle K.E."/>
            <person name="Simonicova L."/>
            <person name="Zhang Q."/>
            <person name="Moye-Rowley W.S."/>
            <person name="Rogers P.D."/>
        </authorList>
    </citation>
    <scope>INDUCTION</scope>
</reference>
<reference key="27">
    <citation type="journal article" date="2018" name="Mycoses">
        <title>CgPDR1 gain-of-function mutations lead to azole-resistance and increased adhesion in clinical Candida glabrata strains.</title>
        <authorList>
            <person name="Ni Q."/>
            <person name="Wang C."/>
            <person name="Tian Y."/>
            <person name="Dong D."/>
            <person name="Jiang C."/>
            <person name="Mao E."/>
            <person name="Peng Y."/>
        </authorList>
    </citation>
    <scope>FUNCTION</scope>
    <scope>MUTAGENESIS OF LEU-344; GLY-346; PRO-927 AND GLY-1099</scope>
</reference>
<feature type="chain" id="PRO_0000445081" description="Transcription factor PDR1">
    <location>
        <begin position="1"/>
        <end position="1107"/>
    </location>
</feature>
<feature type="DNA-binding region" description="Zn(2)-C6 fungal-type" evidence="2">
    <location>
        <begin position="31"/>
        <end position="57"/>
    </location>
</feature>
<feature type="region of interest" description="DNA-binding domain (DBD)" evidence="31 32">
    <location>
        <begin position="1"/>
        <end position="296"/>
    </location>
</feature>
<feature type="region of interest" description="Disordered" evidence="3">
    <location>
        <begin position="1"/>
        <end position="27"/>
    </location>
</feature>
<feature type="region of interest" description="Disordered" evidence="3">
    <location>
        <begin position="66"/>
        <end position="89"/>
    </location>
</feature>
<feature type="region of interest" description="Disordered" evidence="3">
    <location>
        <begin position="149"/>
        <end position="204"/>
    </location>
</feature>
<feature type="region of interest" description="Inhibitory domain (ID)" evidence="32">
    <location>
        <begin position="323"/>
        <end position="476"/>
    </location>
</feature>
<feature type="region of interest" description="Middle homology region (MHR)" evidence="32">
    <location>
        <begin position="542"/>
        <end position="616"/>
    </location>
</feature>
<feature type="region of interest" description="Activation domain (AD)" evidence="31 32">
    <location>
        <begin position="968"/>
        <end position="1107"/>
    </location>
</feature>
<feature type="region of interest" description="Disordered" evidence="3">
    <location>
        <begin position="999"/>
        <end position="1022"/>
    </location>
</feature>
<feature type="short sequence motif" description="9aaTAD" evidence="1">
    <location>
        <begin position="1091"/>
        <end position="1099"/>
    </location>
</feature>
<feature type="compositionally biased region" description="Polar residues" evidence="3">
    <location>
        <begin position="1"/>
        <end position="11"/>
    </location>
</feature>
<feature type="compositionally biased region" description="Basic and acidic residues" evidence="3">
    <location>
        <begin position="175"/>
        <end position="204"/>
    </location>
</feature>
<feature type="compositionally biased region" description="Polar residues" evidence="3">
    <location>
        <begin position="1010"/>
        <end position="1022"/>
    </location>
</feature>
<feature type="mutagenesis site" description="Gain-of-function mutation leading to increased PDR1 activity and fluconazole resistance." evidence="20">
    <original>D</original>
    <variation>N</variation>
    <location>
        <position position="243"/>
    </location>
</feature>
<feature type="mutagenesis site" description="Behaves as a hyperactive transcription factor that is lethal unless conditionally expressed." evidence="25">
    <location>
        <begin position="255"/>
        <end position="968"/>
    </location>
</feature>
<feature type="mutagenesis site" description="Gain-of-function mutation leading to increased PDR1 activity, fluconazole resistance, as well as to decreased adherence to and uptake by host macrophages." evidence="15 17">
    <original>L</original>
    <variation>F</variation>
    <location>
        <position position="280"/>
    </location>
</feature>
<feature type="mutagenesis site" description="Gain-of-function mutation leading to increased PDR1 activity and fluconazole resistance." evidence="11">
    <original>L</original>
    <variation>P</variation>
    <location>
        <position position="280"/>
    </location>
</feature>
<feature type="mutagenesis site" description="Gain-of-function mutation leading to increased PDR1 activity and fluconazole resistance." evidence="6">
    <original>W</original>
    <variation>S</variation>
    <location>
        <position position="297"/>
    </location>
</feature>
<feature type="mutagenesis site" description="Gain-of-function mutation leading to increased PDR1 activity and fluconazole resistance." evidence="11 26">
    <original>L</original>
    <variation>S</variation>
    <location>
        <position position="344"/>
    </location>
</feature>
<feature type="mutagenesis site" description="Gain-of-function mutation leading to increased PDR1 activity and fluconazole resistance." evidence="26">
    <original>G</original>
    <variation>D</variation>
    <location>
        <position position="346"/>
    </location>
</feature>
<feature type="mutagenesis site" description="Gain-of-function mutation leading to increased PDR1 activity and fluconazole resistance." evidence="11">
    <original>G</original>
    <variation>A</variation>
    <location>
        <position position="348"/>
    </location>
</feature>
<feature type="mutagenesis site" description="Gain-of-function mutation leading to increased PDR1 activity, fluconazole resistance, as well as to decreased adherence to and uptake by host macrophages." evidence="15 17 25">
    <original>R</original>
    <variation>W</variation>
    <location>
        <position position="376"/>
    </location>
</feature>
<feature type="mutagenesis site" description="Gain-of-function mutation leading to increased PDR1 activity and fluconazole resistance." evidence="11">
    <original>S</original>
    <variation>L</variation>
    <location>
        <position position="391"/>
    </location>
</feature>
<feature type="mutagenesis site" description="Gain-of-function mutation leading to increased PDR1 activity and fluconazole resistance." evidence="6">
    <original>F</original>
    <variation>L</variation>
    <location>
        <position position="575"/>
    </location>
</feature>
<feature type="mutagenesis site" description="Gain-of-function mutation leading to increased PDR1 activity and fluconazole resistance." evidence="15 25">
    <original>Y</original>
    <variation>C</variation>
    <location>
        <position position="584"/>
    </location>
</feature>
<feature type="mutagenesis site" description="Gain-of-function mutation leading to increased PDR1 activity, fluconazole resistance, as well as to decreased adherence to and uptake by host macrophages." evidence="15 17">
    <original>T</original>
    <variation>A</variation>
    <location>
        <position position="588"/>
    </location>
</feature>
<feature type="mutagenesis site" description="Gain-of-function mutation leading to increased PDR1 activity and fluconazole resistance." evidence="11">
    <original>N</original>
    <variation>I</variation>
    <location>
        <position position="764"/>
    </location>
</feature>
<feature type="mutagenesis site" description="Gain-of-function mutation leading to increased PDR1 activity and fluconazole resistance." evidence="11">
    <original>R</original>
    <variation>I</variation>
    <location>
        <position position="772"/>
    </location>
</feature>
<feature type="mutagenesis site" description="Gain-of-function mutation leading to increased PDR1 activity and fluconazole resistance." evidence="15 25">
    <original>P</original>
    <variation>L</variation>
    <location>
        <position position="822"/>
    </location>
</feature>
<feature type="mutagenesis site" description="Gain-of-function mutation leading to increased PDR1 activity and fluconazole resistance." evidence="26">
    <original>P</original>
    <variation>S</variation>
    <location>
        <position position="927"/>
    </location>
</feature>
<feature type="mutagenesis site" description="Gain-of-function mutation leading to increased PDR1 activity and fluconazole resistance." evidence="11">
    <original>G</original>
    <variation>S</variation>
    <location>
        <position position="943"/>
    </location>
</feature>
<feature type="mutagenesis site" description="Loss-of-function mutation enhancing the sensitivity to cycloheximide." evidence="12">
    <location>
        <begin position="947"/>
        <end position="1107"/>
    </location>
</feature>
<feature type="mutagenesis site" description="Gain-of-function mutation leading to increased PDR1 activity and fluconazole resistance." evidence="15 25">
    <original>D</original>
    <variation>G</variation>
    <location>
        <position position="1082"/>
    </location>
</feature>
<feature type="mutagenesis site" description="Gain-of-function mutation leading to increased PDR1 activity and fluconazole resistance." evidence="15">
    <original>E</original>
    <variation>Q</variation>
    <location>
        <position position="1083"/>
    </location>
</feature>
<feature type="mutagenesis site" description="Gain-of-function mutation leading to increased PDR1 activity and fluconazole resistance." evidence="26">
    <original>G</original>
    <variation>D</variation>
    <location>
        <position position="1099"/>
    </location>
</feature>
<dbReference type="EMBL" id="CR380947">
    <property type="protein sequence ID" value="CAG57683.1"/>
    <property type="molecule type" value="Genomic_DNA"/>
</dbReference>
<dbReference type="RefSeq" id="XP_444792.1">
    <property type="nucleotide sequence ID" value="XM_444792.1"/>
</dbReference>
<dbReference type="SMR" id="Q6FXU7"/>
<dbReference type="FunCoup" id="Q6FXU7">
    <property type="interactions" value="3885"/>
</dbReference>
<dbReference type="STRING" id="284593.Q6FXU7"/>
<dbReference type="EnsemblFungi" id="CAGL0A00451g-T">
    <property type="protein sequence ID" value="CAGL0A00451g-T-p1"/>
    <property type="gene ID" value="CAGL0A00451g"/>
</dbReference>
<dbReference type="GeneID" id="2886430"/>
<dbReference type="KEGG" id="cgr:2886430"/>
<dbReference type="CGD" id="CAL0126583">
    <property type="gene designation" value="PDR1"/>
</dbReference>
<dbReference type="VEuPathDB" id="FungiDB:CAGL0A00451g"/>
<dbReference type="eggNOG" id="ENOG502QV4Q">
    <property type="taxonomic scope" value="Eukaryota"/>
</dbReference>
<dbReference type="HOGENOM" id="CLU_304446_0_0_1"/>
<dbReference type="InParanoid" id="Q6FXU7"/>
<dbReference type="OMA" id="HRWEFYV"/>
<dbReference type="PHI-base" id="PHI:7980"/>
<dbReference type="Proteomes" id="UP000002428">
    <property type="component" value="Chromosome A"/>
</dbReference>
<dbReference type="GO" id="GO:0005829">
    <property type="term" value="C:cytosol"/>
    <property type="evidence" value="ECO:0007669"/>
    <property type="project" value="EnsemblFungi"/>
</dbReference>
<dbReference type="GO" id="GO:0062040">
    <property type="term" value="C:fungal biofilm matrix"/>
    <property type="evidence" value="ECO:0000314"/>
    <property type="project" value="CGD"/>
</dbReference>
<dbReference type="GO" id="GO:0005634">
    <property type="term" value="C:nucleus"/>
    <property type="evidence" value="ECO:0007669"/>
    <property type="project" value="UniProtKB-SubCell"/>
</dbReference>
<dbReference type="GO" id="GO:0001228">
    <property type="term" value="F:DNA-binding transcription activator activity, RNA polymerase II-specific"/>
    <property type="evidence" value="ECO:0007669"/>
    <property type="project" value="EnsemblFungi"/>
</dbReference>
<dbReference type="GO" id="GO:0003700">
    <property type="term" value="F:DNA-binding transcription factor activity"/>
    <property type="evidence" value="ECO:0000314"/>
    <property type="project" value="CGD"/>
</dbReference>
<dbReference type="GO" id="GO:0043565">
    <property type="term" value="F:sequence-specific DNA binding"/>
    <property type="evidence" value="ECO:0000314"/>
    <property type="project" value="CGD"/>
</dbReference>
<dbReference type="GO" id="GO:0008270">
    <property type="term" value="F:zinc ion binding"/>
    <property type="evidence" value="ECO:0007669"/>
    <property type="project" value="InterPro"/>
</dbReference>
<dbReference type="GO" id="GO:0071466">
    <property type="term" value="P:cellular response to xenobiotic stimulus"/>
    <property type="evidence" value="ECO:0000315"/>
    <property type="project" value="CGD"/>
</dbReference>
<dbReference type="GO" id="GO:0006351">
    <property type="term" value="P:DNA-templated transcription"/>
    <property type="evidence" value="ECO:0007669"/>
    <property type="project" value="InterPro"/>
</dbReference>
<dbReference type="GO" id="GO:0030522">
    <property type="term" value="P:intracellular receptor signaling pathway"/>
    <property type="evidence" value="ECO:0000315"/>
    <property type="project" value="CGD"/>
</dbReference>
<dbReference type="GO" id="GO:2001040">
    <property type="term" value="P:positive regulation of cellular response to drug"/>
    <property type="evidence" value="ECO:0007669"/>
    <property type="project" value="EnsemblFungi"/>
</dbReference>
<dbReference type="GO" id="GO:0045944">
    <property type="term" value="P:positive regulation of transcription by RNA polymerase II"/>
    <property type="evidence" value="ECO:0000315"/>
    <property type="project" value="CGD"/>
</dbReference>
<dbReference type="GO" id="GO:0006357">
    <property type="term" value="P:regulation of transcription by RNA polymerase II"/>
    <property type="evidence" value="ECO:0000315"/>
    <property type="project" value="CGD"/>
</dbReference>
<dbReference type="GO" id="GO:0009410">
    <property type="term" value="P:response to xenobiotic stimulus"/>
    <property type="evidence" value="ECO:0000314"/>
    <property type="project" value="CGD"/>
</dbReference>
<dbReference type="CDD" id="cd12148">
    <property type="entry name" value="fungal_TF_MHR"/>
    <property type="match status" value="1"/>
</dbReference>
<dbReference type="CDD" id="cd00067">
    <property type="entry name" value="GAL4"/>
    <property type="match status" value="1"/>
</dbReference>
<dbReference type="Gene3D" id="4.10.240.10">
    <property type="entry name" value="Zn(2)-C6 fungal-type DNA-binding domain"/>
    <property type="match status" value="1"/>
</dbReference>
<dbReference type="InterPro" id="IPR050987">
    <property type="entry name" value="AtrR-like"/>
</dbReference>
<dbReference type="InterPro" id="IPR007219">
    <property type="entry name" value="Transcription_factor_dom_fun"/>
</dbReference>
<dbReference type="InterPro" id="IPR036864">
    <property type="entry name" value="Zn2-C6_fun-type_DNA-bd_sf"/>
</dbReference>
<dbReference type="InterPro" id="IPR001138">
    <property type="entry name" value="Zn2Cys6_DnaBD"/>
</dbReference>
<dbReference type="PANTHER" id="PTHR46910:SF3">
    <property type="entry name" value="HALOTOLERANCE PROTEIN 9-RELATED"/>
    <property type="match status" value="1"/>
</dbReference>
<dbReference type="PANTHER" id="PTHR46910">
    <property type="entry name" value="TRANSCRIPTION FACTOR PDR1"/>
    <property type="match status" value="1"/>
</dbReference>
<dbReference type="Pfam" id="PF04082">
    <property type="entry name" value="Fungal_trans"/>
    <property type="match status" value="1"/>
</dbReference>
<dbReference type="Pfam" id="PF00172">
    <property type="entry name" value="Zn_clus"/>
    <property type="match status" value="1"/>
</dbReference>
<dbReference type="SMART" id="SM00066">
    <property type="entry name" value="GAL4"/>
    <property type="match status" value="1"/>
</dbReference>
<dbReference type="SUPFAM" id="SSF57701">
    <property type="entry name" value="Zn2/Cys6 DNA-binding domain"/>
    <property type="match status" value="1"/>
</dbReference>
<dbReference type="PROSITE" id="PS00463">
    <property type="entry name" value="ZN2_CY6_FUNGAL_1"/>
    <property type="match status" value="1"/>
</dbReference>
<dbReference type="PROSITE" id="PS50048">
    <property type="entry name" value="ZN2_CY6_FUNGAL_2"/>
    <property type="match status" value="1"/>
</dbReference>
<evidence type="ECO:0000250" key="1">
    <source>
        <dbReference type="UniProtKB" id="P12383"/>
    </source>
</evidence>
<evidence type="ECO:0000255" key="2">
    <source>
        <dbReference type="PROSITE-ProRule" id="PRU00227"/>
    </source>
</evidence>
<evidence type="ECO:0000256" key="3">
    <source>
        <dbReference type="SAM" id="MobiDB-lite"/>
    </source>
</evidence>
<evidence type="ECO:0000269" key="4">
    <source>
    </source>
</evidence>
<evidence type="ECO:0000269" key="5">
    <source>
    </source>
</evidence>
<evidence type="ECO:0000269" key="6">
    <source>
    </source>
</evidence>
<evidence type="ECO:0000269" key="7">
    <source>
    </source>
</evidence>
<evidence type="ECO:0000269" key="8">
    <source>
    </source>
</evidence>
<evidence type="ECO:0000269" key="9">
    <source>
    </source>
</evidence>
<evidence type="ECO:0000269" key="10">
    <source>
    </source>
</evidence>
<evidence type="ECO:0000269" key="11">
    <source>
    </source>
</evidence>
<evidence type="ECO:0000269" key="12">
    <source>
    </source>
</evidence>
<evidence type="ECO:0000269" key="13">
    <source>
    </source>
</evidence>
<evidence type="ECO:0000269" key="14">
    <source>
    </source>
</evidence>
<evidence type="ECO:0000269" key="15">
    <source>
    </source>
</evidence>
<evidence type="ECO:0000269" key="16">
    <source>
    </source>
</evidence>
<evidence type="ECO:0000269" key="17">
    <source>
    </source>
</evidence>
<evidence type="ECO:0000269" key="18">
    <source>
    </source>
</evidence>
<evidence type="ECO:0000269" key="19">
    <source>
    </source>
</evidence>
<evidence type="ECO:0000269" key="20">
    <source>
    </source>
</evidence>
<evidence type="ECO:0000269" key="21">
    <source>
    </source>
</evidence>
<evidence type="ECO:0000269" key="22">
    <source>
    </source>
</evidence>
<evidence type="ECO:0000269" key="23">
    <source>
    </source>
</evidence>
<evidence type="ECO:0000269" key="24">
    <source>
    </source>
</evidence>
<evidence type="ECO:0000269" key="25">
    <source>
    </source>
</evidence>
<evidence type="ECO:0000269" key="26">
    <source>
    </source>
</evidence>
<evidence type="ECO:0000269" key="27">
    <source>
    </source>
</evidence>
<evidence type="ECO:0000269" key="28">
    <source>
    </source>
</evidence>
<evidence type="ECO:0000269" key="29">
    <source>
    </source>
</evidence>
<evidence type="ECO:0000303" key="30">
    <source>
    </source>
</evidence>
<evidence type="ECO:0000305" key="31">
    <source>
    </source>
</evidence>
<evidence type="ECO:0000305" key="32">
    <source>
    </source>
</evidence>
<proteinExistence type="evidence at protein level"/>
<organism>
    <name type="scientific">Candida glabrata (strain ATCC 2001 / BCRC 20586 / JCM 3761 / NBRC 0622 / NRRL Y-65 / CBS 138)</name>
    <name type="common">Yeast</name>
    <name type="synonym">Nakaseomyces glabratus</name>
    <dbReference type="NCBI Taxonomy" id="284593"/>
    <lineage>
        <taxon>Eukaryota</taxon>
        <taxon>Fungi</taxon>
        <taxon>Dikarya</taxon>
        <taxon>Ascomycota</taxon>
        <taxon>Saccharomycotina</taxon>
        <taxon>Saccharomycetes</taxon>
        <taxon>Saccharomycetales</taxon>
        <taxon>Saccharomycetaceae</taxon>
        <taxon>Nakaseomyces</taxon>
    </lineage>
</organism>
<keyword id="KW-0238">DNA-binding</keyword>
<keyword id="KW-0479">Metal-binding</keyword>
<keyword id="KW-0539">Nucleus</keyword>
<keyword id="KW-1185">Reference proteome</keyword>
<keyword id="KW-0804">Transcription</keyword>
<keyword id="KW-0805">Transcription regulation</keyword>
<keyword id="KW-0843">Virulence</keyword>
<keyword id="KW-0862">Zinc</keyword>
<accession>Q6FXU7</accession>
<gene>
    <name evidence="30" type="primary">PDR1</name>
    <name type="ordered locus">CAGL0A00451g</name>
</gene>
<protein>
    <recommendedName>
        <fullName evidence="30">Transcription factor PDR1</fullName>
    </recommendedName>
    <alternativeName>
        <fullName evidence="30">Pleiotropic drug resistance protein 1</fullName>
    </alternativeName>
</protein>
<sequence length="1107" mass="126195">MQTLETTSKSNPGEVKAQKPSTRRTKVGKACDSCRRRKIKCNGLKPCPSCTIYGCECTYTDAKSTKNLKSNDAGKSKPTGRVSKNKETTRVDKDIRKLEQQYVPINANIHVGPRFPSENILNGYPQCGAPQNNVVGNPLAVNTQCHRGLSETPMSSTFKESNLRDDRLLQSSDTDDMRNGDSEERDLKGSDSENVKSKDNKSDPLIIYKDDTHIESTVNKLTQAVNELKSLQNAPSSIKSSIDAIELQLRNILDNWKPEVDFEKAKINESATTKSLETNLLRNKYTNHVHLTRFRIWIDYKNANKNNHFMGECGFSLAESFFASNQPLVDELFGLYSQVEAFSLQGLGYCVHLYEPYMKTEEAIKLMKETLYIILRFIDICVHHINEESISIANPLETYLRKKHLMPMTPTPRSSYGSPQSASTKSLVSKIIERIPQPFIESVTNVSSLQLLDLRDDESKMFGTLLNMCKSIRRKFDSVMSDYDSIVTEKSEGEQNDGKVTVAEFTSLCEAEEMLLALCYNYYNLTLYSFFEFGTNIEYMEHLLLLLEEQLALDEYYGFEKVLNVAVANAKKMGFHRWEFYVGYEESTAEKRRLLWWKLYNYEKASTMKKGFFSVIDDATVNCLLPKIFRNFGYLDRVEFLENIQKPMDLSVFSDVPISVLCKYGELALTIVTSEFHEKFLYADRYTSIRNSAKPPTLKNQLIKEIVDGIAYTETSYEAIRKQTAKLWDIALGKVTKDKINKEDTAAASKFTLSYEYHRFRLINMADNLIARLMVKPKSDWLISVMKGHLNRLYEHWKVMNEIILSMDNDYSIATTFEYYAPSCLCLATQTFLIVRNMEMDDVKMMVAVYKRFLNLGMFLQSAKVCSLADSHTFRDFSRSFSFITIISRLMIIEFMQIKELTKVEFIEKFSEVCPDLADLPPMLLDPNSCLYFSLLQQIKKSGFTLSFKKILEDARMMDFNYDRNLDSEAIKKCNGEFSKSMPSCTNVSDTTTAVSDNSAKKKASMGSARVNSTDTLTASPLSGLRNQTQLDSKDSVPSLEAYTPIDSVSDVPTGEINVPFPPVYNQNGLDQQTTYNLGTLDEFVNKGDLNELYNSLWGDLFSDVYL</sequence>